<comment type="function">
    <text evidence="2">One of the essential components for the initiation of protein synthesis. Protects formylmethionyl-tRNA from spontaneous hydrolysis and promotes its binding to the 30S ribosomal subunits. Also involved in the hydrolysis of GTP during the formation of the 70S ribosomal complex.</text>
</comment>
<comment type="subcellular location">
    <subcellularLocation>
        <location evidence="2">Cytoplasm</location>
    </subcellularLocation>
</comment>
<comment type="similarity">
    <text evidence="2">Belongs to the TRAFAC class translation factor GTPase superfamily. Classic translation factor GTPase family. IF-2 subfamily.</text>
</comment>
<feature type="chain" id="PRO_1000093830" description="Translation initiation factor IF-2">
    <location>
        <begin position="1"/>
        <end position="881"/>
    </location>
</feature>
<feature type="domain" description="tr-type G">
    <location>
        <begin position="380"/>
        <end position="549"/>
    </location>
</feature>
<feature type="region of interest" description="Disordered" evidence="3">
    <location>
        <begin position="53"/>
        <end position="92"/>
    </location>
</feature>
<feature type="region of interest" description="Disordered" evidence="3">
    <location>
        <begin position="163"/>
        <end position="292"/>
    </location>
</feature>
<feature type="region of interest" description="G1" evidence="1">
    <location>
        <begin position="389"/>
        <end position="396"/>
    </location>
</feature>
<feature type="region of interest" description="G2" evidence="1">
    <location>
        <begin position="414"/>
        <end position="418"/>
    </location>
</feature>
<feature type="region of interest" description="G3" evidence="1">
    <location>
        <begin position="435"/>
        <end position="438"/>
    </location>
</feature>
<feature type="region of interest" description="G4" evidence="1">
    <location>
        <begin position="489"/>
        <end position="492"/>
    </location>
</feature>
<feature type="region of interest" description="G5" evidence="1">
    <location>
        <begin position="525"/>
        <end position="527"/>
    </location>
</feature>
<feature type="compositionally biased region" description="Polar residues" evidence="3">
    <location>
        <begin position="81"/>
        <end position="92"/>
    </location>
</feature>
<feature type="compositionally biased region" description="Low complexity" evidence="3">
    <location>
        <begin position="172"/>
        <end position="186"/>
    </location>
</feature>
<feature type="compositionally biased region" description="Basic and acidic residues" evidence="3">
    <location>
        <begin position="219"/>
        <end position="236"/>
    </location>
</feature>
<feature type="compositionally biased region" description="Low complexity" evidence="3">
    <location>
        <begin position="254"/>
        <end position="263"/>
    </location>
</feature>
<feature type="binding site" evidence="2">
    <location>
        <begin position="389"/>
        <end position="396"/>
    </location>
    <ligand>
        <name>GTP</name>
        <dbReference type="ChEBI" id="CHEBI:37565"/>
    </ligand>
</feature>
<feature type="binding site" evidence="2">
    <location>
        <begin position="435"/>
        <end position="439"/>
    </location>
    <ligand>
        <name>GTP</name>
        <dbReference type="ChEBI" id="CHEBI:37565"/>
    </ligand>
</feature>
<feature type="binding site" evidence="2">
    <location>
        <begin position="489"/>
        <end position="492"/>
    </location>
    <ligand>
        <name>GTP</name>
        <dbReference type="ChEBI" id="CHEBI:37565"/>
    </ligand>
</feature>
<dbReference type="EMBL" id="AM743169">
    <property type="protein sequence ID" value="CAQ46817.1"/>
    <property type="molecule type" value="Genomic_DNA"/>
</dbReference>
<dbReference type="RefSeq" id="WP_012480878.1">
    <property type="nucleotide sequence ID" value="NC_010943.1"/>
</dbReference>
<dbReference type="SMR" id="B2FN90"/>
<dbReference type="EnsemblBacteria" id="CAQ46817">
    <property type="protein sequence ID" value="CAQ46817"/>
    <property type="gene ID" value="Smlt3389"/>
</dbReference>
<dbReference type="KEGG" id="sml:Smlt3389"/>
<dbReference type="eggNOG" id="COG0532">
    <property type="taxonomic scope" value="Bacteria"/>
</dbReference>
<dbReference type="HOGENOM" id="CLU_006301_10_2_6"/>
<dbReference type="Proteomes" id="UP000008840">
    <property type="component" value="Chromosome"/>
</dbReference>
<dbReference type="GO" id="GO:0005829">
    <property type="term" value="C:cytosol"/>
    <property type="evidence" value="ECO:0007669"/>
    <property type="project" value="TreeGrafter"/>
</dbReference>
<dbReference type="GO" id="GO:0005525">
    <property type="term" value="F:GTP binding"/>
    <property type="evidence" value="ECO:0007669"/>
    <property type="project" value="UniProtKB-KW"/>
</dbReference>
<dbReference type="GO" id="GO:0003924">
    <property type="term" value="F:GTPase activity"/>
    <property type="evidence" value="ECO:0007669"/>
    <property type="project" value="UniProtKB-UniRule"/>
</dbReference>
<dbReference type="GO" id="GO:0097216">
    <property type="term" value="F:guanosine tetraphosphate binding"/>
    <property type="evidence" value="ECO:0007669"/>
    <property type="project" value="UniProtKB-ARBA"/>
</dbReference>
<dbReference type="GO" id="GO:0003743">
    <property type="term" value="F:translation initiation factor activity"/>
    <property type="evidence" value="ECO:0007669"/>
    <property type="project" value="UniProtKB-UniRule"/>
</dbReference>
<dbReference type="CDD" id="cd01887">
    <property type="entry name" value="IF2_eIF5B"/>
    <property type="match status" value="1"/>
</dbReference>
<dbReference type="CDD" id="cd03702">
    <property type="entry name" value="IF2_mtIF2_II"/>
    <property type="match status" value="1"/>
</dbReference>
<dbReference type="CDD" id="cd03692">
    <property type="entry name" value="mtIF2_IVc"/>
    <property type="match status" value="1"/>
</dbReference>
<dbReference type="FunFam" id="2.40.30.10:FF:000008">
    <property type="entry name" value="Translation initiation factor IF-2"/>
    <property type="match status" value="1"/>
</dbReference>
<dbReference type="FunFam" id="2.40.30.10:FF:000054">
    <property type="entry name" value="Translation initiation factor IF-2"/>
    <property type="match status" value="1"/>
</dbReference>
<dbReference type="FunFam" id="3.40.50.10050:FF:000001">
    <property type="entry name" value="Translation initiation factor IF-2"/>
    <property type="match status" value="1"/>
</dbReference>
<dbReference type="FunFam" id="3.40.50.300:FF:000019">
    <property type="entry name" value="Translation initiation factor IF-2"/>
    <property type="match status" value="1"/>
</dbReference>
<dbReference type="Gene3D" id="3.40.50.300">
    <property type="entry name" value="P-loop containing nucleotide triphosphate hydrolases"/>
    <property type="match status" value="1"/>
</dbReference>
<dbReference type="Gene3D" id="3.30.56.50">
    <property type="entry name" value="Putative DNA-binding domain, N-terminal subdomain of bacterial translation initiation factor IF2"/>
    <property type="match status" value="1"/>
</dbReference>
<dbReference type="Gene3D" id="2.40.30.10">
    <property type="entry name" value="Translation factors"/>
    <property type="match status" value="2"/>
</dbReference>
<dbReference type="Gene3D" id="3.40.50.10050">
    <property type="entry name" value="Translation initiation factor IF- 2, domain 3"/>
    <property type="match status" value="1"/>
</dbReference>
<dbReference type="HAMAP" id="MF_00100_B">
    <property type="entry name" value="IF_2_B"/>
    <property type="match status" value="1"/>
</dbReference>
<dbReference type="InterPro" id="IPR009061">
    <property type="entry name" value="DNA-bd_dom_put_sf"/>
</dbReference>
<dbReference type="InterPro" id="IPR053905">
    <property type="entry name" value="EF-G-like_DII"/>
</dbReference>
<dbReference type="InterPro" id="IPR004161">
    <property type="entry name" value="EFTu-like_2"/>
</dbReference>
<dbReference type="InterPro" id="IPR013575">
    <property type="entry name" value="IF2_assoc_dom_bac"/>
</dbReference>
<dbReference type="InterPro" id="IPR044145">
    <property type="entry name" value="IF2_II"/>
</dbReference>
<dbReference type="InterPro" id="IPR006847">
    <property type="entry name" value="IF2_N"/>
</dbReference>
<dbReference type="InterPro" id="IPR027417">
    <property type="entry name" value="P-loop_NTPase"/>
</dbReference>
<dbReference type="InterPro" id="IPR005225">
    <property type="entry name" value="Small_GTP-bd"/>
</dbReference>
<dbReference type="InterPro" id="IPR000795">
    <property type="entry name" value="T_Tr_GTP-bd_dom"/>
</dbReference>
<dbReference type="InterPro" id="IPR000178">
    <property type="entry name" value="TF_IF2_bacterial-like"/>
</dbReference>
<dbReference type="InterPro" id="IPR015760">
    <property type="entry name" value="TIF_IF2"/>
</dbReference>
<dbReference type="InterPro" id="IPR023115">
    <property type="entry name" value="TIF_IF2_dom3"/>
</dbReference>
<dbReference type="InterPro" id="IPR036925">
    <property type="entry name" value="TIF_IF2_dom3_sf"/>
</dbReference>
<dbReference type="InterPro" id="IPR009000">
    <property type="entry name" value="Transl_B-barrel_sf"/>
</dbReference>
<dbReference type="NCBIfam" id="TIGR00487">
    <property type="entry name" value="IF-2"/>
    <property type="match status" value="1"/>
</dbReference>
<dbReference type="NCBIfam" id="TIGR00231">
    <property type="entry name" value="small_GTP"/>
    <property type="match status" value="1"/>
</dbReference>
<dbReference type="PANTHER" id="PTHR43381:SF5">
    <property type="entry name" value="TR-TYPE G DOMAIN-CONTAINING PROTEIN"/>
    <property type="match status" value="1"/>
</dbReference>
<dbReference type="PANTHER" id="PTHR43381">
    <property type="entry name" value="TRANSLATION INITIATION FACTOR IF-2-RELATED"/>
    <property type="match status" value="1"/>
</dbReference>
<dbReference type="Pfam" id="PF22042">
    <property type="entry name" value="EF-G_D2"/>
    <property type="match status" value="1"/>
</dbReference>
<dbReference type="Pfam" id="PF00009">
    <property type="entry name" value="GTP_EFTU"/>
    <property type="match status" value="1"/>
</dbReference>
<dbReference type="Pfam" id="PF03144">
    <property type="entry name" value="GTP_EFTU_D2"/>
    <property type="match status" value="1"/>
</dbReference>
<dbReference type="Pfam" id="PF11987">
    <property type="entry name" value="IF-2"/>
    <property type="match status" value="1"/>
</dbReference>
<dbReference type="Pfam" id="PF08364">
    <property type="entry name" value="IF2_assoc"/>
    <property type="match status" value="1"/>
</dbReference>
<dbReference type="Pfam" id="PF04760">
    <property type="entry name" value="IF2_N"/>
    <property type="match status" value="1"/>
</dbReference>
<dbReference type="SUPFAM" id="SSF52156">
    <property type="entry name" value="Initiation factor IF2/eIF5b, domain 3"/>
    <property type="match status" value="1"/>
</dbReference>
<dbReference type="SUPFAM" id="SSF52540">
    <property type="entry name" value="P-loop containing nucleoside triphosphate hydrolases"/>
    <property type="match status" value="1"/>
</dbReference>
<dbReference type="SUPFAM" id="SSF46955">
    <property type="entry name" value="Putative DNA-binding domain"/>
    <property type="match status" value="1"/>
</dbReference>
<dbReference type="SUPFAM" id="SSF50447">
    <property type="entry name" value="Translation proteins"/>
    <property type="match status" value="2"/>
</dbReference>
<dbReference type="PROSITE" id="PS51722">
    <property type="entry name" value="G_TR_2"/>
    <property type="match status" value="1"/>
</dbReference>
<dbReference type="PROSITE" id="PS01176">
    <property type="entry name" value="IF2"/>
    <property type="match status" value="1"/>
</dbReference>
<evidence type="ECO:0000250" key="1"/>
<evidence type="ECO:0000255" key="2">
    <source>
        <dbReference type="HAMAP-Rule" id="MF_00100"/>
    </source>
</evidence>
<evidence type="ECO:0000256" key="3">
    <source>
        <dbReference type="SAM" id="MobiDB-lite"/>
    </source>
</evidence>
<keyword id="KW-0963">Cytoplasm</keyword>
<keyword id="KW-0342">GTP-binding</keyword>
<keyword id="KW-0396">Initiation factor</keyword>
<keyword id="KW-0547">Nucleotide-binding</keyword>
<keyword id="KW-0648">Protein biosynthesis</keyword>
<keyword id="KW-1185">Reference proteome</keyword>
<accession>B2FN90</accession>
<organism>
    <name type="scientific">Stenotrophomonas maltophilia (strain K279a)</name>
    <dbReference type="NCBI Taxonomy" id="522373"/>
    <lineage>
        <taxon>Bacteria</taxon>
        <taxon>Pseudomonadati</taxon>
        <taxon>Pseudomonadota</taxon>
        <taxon>Gammaproteobacteria</taxon>
        <taxon>Lysobacterales</taxon>
        <taxon>Lysobacteraceae</taxon>
        <taxon>Stenotrophomonas</taxon>
        <taxon>Stenotrophomonas maltophilia group</taxon>
    </lineage>
</organism>
<proteinExistence type="inferred from homology"/>
<name>IF2_STRMK</name>
<gene>
    <name evidence="2" type="primary">infB</name>
    <name type="ordered locus">Smlt3389</name>
</gene>
<reference key="1">
    <citation type="journal article" date="2008" name="Genome Biol.">
        <title>The complete genome, comparative and functional analysis of Stenotrophomonas maltophilia reveals an organism heavily shielded by drug resistance determinants.</title>
        <authorList>
            <person name="Crossman L.C."/>
            <person name="Gould V.C."/>
            <person name="Dow J.M."/>
            <person name="Vernikos G.S."/>
            <person name="Okazaki A."/>
            <person name="Sebaihia M."/>
            <person name="Saunders D."/>
            <person name="Arrowsmith C."/>
            <person name="Carver T."/>
            <person name="Peters N."/>
            <person name="Adlem E."/>
            <person name="Kerhornou A."/>
            <person name="Lord A."/>
            <person name="Murphy L."/>
            <person name="Seeger K."/>
            <person name="Squares R."/>
            <person name="Rutter S."/>
            <person name="Quail M.A."/>
            <person name="Rajandream M.A."/>
            <person name="Harris D."/>
            <person name="Churcher C."/>
            <person name="Bentley S.D."/>
            <person name="Parkhill J."/>
            <person name="Thomson N.R."/>
            <person name="Avison M.B."/>
        </authorList>
    </citation>
    <scope>NUCLEOTIDE SEQUENCE [LARGE SCALE GENOMIC DNA]</scope>
    <source>
        <strain>K279a</strain>
    </source>
</reference>
<sequence>MSQQTTIRKLAELVNTPVEKLLEQLAGAGMKFSGPDQVVTSSEKVKLLGFLRRSHGKPEQAPEESDQSAKKITLNRRKQQEVTVNSGRSKTTVNVEVRQKRTYVKDGARAMTPDEERADILRKLEESRARNLAEQQALAEKDRLRDEAIVRAREEEIAAKERAEAEKKAAEEAAAAAKAAEALAAAKPKRAPIDETAPRPPRTPAAAPAAPRSAPPPPRNDDRNNRSAPRNERGPGDRFAGQMHLSAADRARRGNSNNSNTRGRPGGRNQAGGRRDMSRGGNNAGPHAFERPTAPVVREVAIGDTITVADLAQKLALKGGEVVKALFKMGVMATITQSIDHDTAALVTEELGHKAIRANDNDAEDALLASTGENQGEATQRPPVVTIMGHVDHGKTSLLDYIRRTKVATGEAGGITQHIGAYHVDTPKGVISFLDTPGHAAFTSMRARGAKLTDIVVLVVAADDGVMPQTKEAIQHARSAGVPLIVAINKIDKSDADPMRVKNELLSEQVVAEDFGGDTQMVEISAKTGLGIDDLLDAISIQAELLELKAVDEGRASGVVIESSLDKGRGPVATVLVQQGRLKKGDYLVCGIQYGRVRALFDETGKQPEFAGPSIPVQVLGLSGVPEAGDDFVVVEDERLAKDVAQQRETKRRESRLVATAGSRMEDIMATLGKGEGQQVLNLVIKADVQGSVQALSQALVALSNEDIRINVIHSGVGGITESDANSAAASKATVIGFNVRADASARRIIESNGVDLRYFSIIYDVIDQVKQVASGLLGVEIREEIIGIAEVRDVFRSSKLGAVAGSMVIEGVVRRNKPIRVLRDSVVIFEGELESLRRFKENVEEVRNGTECGIAVKAYNDVKPGDQIECFERIEVPRTL</sequence>
<protein>
    <recommendedName>
        <fullName evidence="2">Translation initiation factor IF-2</fullName>
    </recommendedName>
</protein>